<comment type="function">
    <text evidence="1">NDH-1 shuttles electrons from NADH, via FMN and iron-sulfur (Fe-S) centers, to quinones in the respiratory chain. The immediate electron acceptor for the enzyme in this species is believed to be ubiquinone. Couples the redox reaction to proton translocation (for every two electrons transferred, four hydrogen ions are translocated across the cytoplasmic membrane), and thus conserves the redox energy in a proton gradient.</text>
</comment>
<comment type="catalytic activity">
    <reaction evidence="1">
        <text>a quinone + NADH + 5 H(+)(in) = a quinol + NAD(+) + 4 H(+)(out)</text>
        <dbReference type="Rhea" id="RHEA:57888"/>
        <dbReference type="ChEBI" id="CHEBI:15378"/>
        <dbReference type="ChEBI" id="CHEBI:24646"/>
        <dbReference type="ChEBI" id="CHEBI:57540"/>
        <dbReference type="ChEBI" id="CHEBI:57945"/>
        <dbReference type="ChEBI" id="CHEBI:132124"/>
    </reaction>
</comment>
<comment type="cofactor">
    <cofactor evidence="1">
        <name>[4Fe-4S] cluster</name>
        <dbReference type="ChEBI" id="CHEBI:49883"/>
    </cofactor>
    <text evidence="1">Binds 2 [4Fe-4S] clusters per subunit.</text>
</comment>
<comment type="subunit">
    <text evidence="1">NDH-1 is composed of 14 different subunits. Subunits NuoA, H, J, K, L, M, N constitute the membrane sector of the complex.</text>
</comment>
<comment type="subcellular location">
    <subcellularLocation>
        <location evidence="1">Cell membrane</location>
        <topology evidence="1">Peripheral membrane protein</topology>
    </subcellularLocation>
</comment>
<comment type="similarity">
    <text evidence="1">Belongs to the complex I 23 kDa subunit family.</text>
</comment>
<sequence length="217" mass="24151">MGILDPYKGFGVTFGTMFKKPTTEQYPEEKKETAPRFHGRHQLNRHPDGLEKCVGCELCAWACPADAIYVEGADNTEAERYSPGERYGRVYQINYLRCILCGLCIEACPTRALTMSNDYELADDSRQDLIFTKEQLLAPLREGMEAPPHPMRLGSSETDYYTRDPDAPLPWQASGQEQVAGQAAELEAADVIARRTAGEHSRADEVPAHGAGSERPR</sequence>
<gene>
    <name evidence="1" type="primary">nuoI</name>
    <name type="ordered locus">Francci3_0546</name>
</gene>
<reference key="1">
    <citation type="journal article" date="2007" name="Genome Res.">
        <title>Genome characteristics of facultatively symbiotic Frankia sp. strains reflect host range and host plant biogeography.</title>
        <authorList>
            <person name="Normand P."/>
            <person name="Lapierre P."/>
            <person name="Tisa L.S."/>
            <person name="Gogarten J.P."/>
            <person name="Alloisio N."/>
            <person name="Bagnarol E."/>
            <person name="Bassi C.A."/>
            <person name="Berry A.M."/>
            <person name="Bickhart D.M."/>
            <person name="Choisne N."/>
            <person name="Couloux A."/>
            <person name="Cournoyer B."/>
            <person name="Cruveiller S."/>
            <person name="Daubin V."/>
            <person name="Demange N."/>
            <person name="Francino M.P."/>
            <person name="Goltsman E."/>
            <person name="Huang Y."/>
            <person name="Kopp O.R."/>
            <person name="Labarre L."/>
            <person name="Lapidus A."/>
            <person name="Lavire C."/>
            <person name="Marechal J."/>
            <person name="Martinez M."/>
            <person name="Mastronunzio J.E."/>
            <person name="Mullin B.C."/>
            <person name="Niemann J."/>
            <person name="Pujic P."/>
            <person name="Rawnsley T."/>
            <person name="Rouy Z."/>
            <person name="Schenowitz C."/>
            <person name="Sellstedt A."/>
            <person name="Tavares F."/>
            <person name="Tomkins J.P."/>
            <person name="Vallenet D."/>
            <person name="Valverde C."/>
            <person name="Wall L.G."/>
            <person name="Wang Y."/>
            <person name="Medigue C."/>
            <person name="Benson D.R."/>
        </authorList>
    </citation>
    <scope>NUCLEOTIDE SEQUENCE [LARGE SCALE GENOMIC DNA]</scope>
    <source>
        <strain>DSM 45818 / CECT 9043 / HFP020203 / CcI3</strain>
    </source>
</reference>
<protein>
    <recommendedName>
        <fullName evidence="1">NADH-quinone oxidoreductase subunit I</fullName>
        <ecNumber evidence="1">7.1.1.-</ecNumber>
    </recommendedName>
    <alternativeName>
        <fullName evidence="1">NADH dehydrogenase I subunit I</fullName>
    </alternativeName>
    <alternativeName>
        <fullName evidence="1">NDH-1 subunit I</fullName>
    </alternativeName>
</protein>
<evidence type="ECO:0000255" key="1">
    <source>
        <dbReference type="HAMAP-Rule" id="MF_01351"/>
    </source>
</evidence>
<evidence type="ECO:0000256" key="2">
    <source>
        <dbReference type="SAM" id="MobiDB-lite"/>
    </source>
</evidence>
<dbReference type="EC" id="7.1.1.-" evidence="1"/>
<dbReference type="EMBL" id="CP000249">
    <property type="protein sequence ID" value="ABD09930.1"/>
    <property type="molecule type" value="Genomic_DNA"/>
</dbReference>
<dbReference type="RefSeq" id="WP_011435006.1">
    <property type="nucleotide sequence ID" value="NZ_LRTJ01000013.1"/>
</dbReference>
<dbReference type="SMR" id="Q2JFL2"/>
<dbReference type="STRING" id="106370.Francci3_0546"/>
<dbReference type="KEGG" id="fra:Francci3_0546"/>
<dbReference type="eggNOG" id="COG1143">
    <property type="taxonomic scope" value="Bacteria"/>
</dbReference>
<dbReference type="HOGENOM" id="CLU_067218_4_0_11"/>
<dbReference type="OrthoDB" id="9808559at2"/>
<dbReference type="PhylomeDB" id="Q2JFL2"/>
<dbReference type="Proteomes" id="UP000001937">
    <property type="component" value="Chromosome"/>
</dbReference>
<dbReference type="GO" id="GO:0005886">
    <property type="term" value="C:plasma membrane"/>
    <property type="evidence" value="ECO:0007669"/>
    <property type="project" value="UniProtKB-SubCell"/>
</dbReference>
<dbReference type="GO" id="GO:0051539">
    <property type="term" value="F:4 iron, 4 sulfur cluster binding"/>
    <property type="evidence" value="ECO:0007669"/>
    <property type="project" value="UniProtKB-KW"/>
</dbReference>
<dbReference type="GO" id="GO:0005506">
    <property type="term" value="F:iron ion binding"/>
    <property type="evidence" value="ECO:0007669"/>
    <property type="project" value="UniProtKB-UniRule"/>
</dbReference>
<dbReference type="GO" id="GO:0050136">
    <property type="term" value="F:NADH:ubiquinone reductase (non-electrogenic) activity"/>
    <property type="evidence" value="ECO:0007669"/>
    <property type="project" value="UniProtKB-UniRule"/>
</dbReference>
<dbReference type="GO" id="GO:0048038">
    <property type="term" value="F:quinone binding"/>
    <property type="evidence" value="ECO:0007669"/>
    <property type="project" value="UniProtKB-KW"/>
</dbReference>
<dbReference type="GO" id="GO:0009060">
    <property type="term" value="P:aerobic respiration"/>
    <property type="evidence" value="ECO:0007669"/>
    <property type="project" value="TreeGrafter"/>
</dbReference>
<dbReference type="FunFam" id="3.30.70.3270:FF:000007">
    <property type="entry name" value="NADH-quinone oxidoreductase subunit I"/>
    <property type="match status" value="1"/>
</dbReference>
<dbReference type="Gene3D" id="3.30.70.3270">
    <property type="match status" value="1"/>
</dbReference>
<dbReference type="HAMAP" id="MF_01351">
    <property type="entry name" value="NDH1_NuoI"/>
    <property type="match status" value="1"/>
</dbReference>
<dbReference type="InterPro" id="IPR017896">
    <property type="entry name" value="4Fe4S_Fe-S-bd"/>
</dbReference>
<dbReference type="InterPro" id="IPR017900">
    <property type="entry name" value="4Fe4S_Fe_S_CS"/>
</dbReference>
<dbReference type="InterPro" id="IPR010226">
    <property type="entry name" value="NADH_quinone_OxRdtase_chainI"/>
</dbReference>
<dbReference type="NCBIfam" id="TIGR01971">
    <property type="entry name" value="NuoI"/>
    <property type="match status" value="1"/>
</dbReference>
<dbReference type="NCBIfam" id="NF004537">
    <property type="entry name" value="PRK05888.1-3"/>
    <property type="match status" value="1"/>
</dbReference>
<dbReference type="PANTHER" id="PTHR10849:SF20">
    <property type="entry name" value="NADH DEHYDROGENASE [UBIQUINONE] IRON-SULFUR PROTEIN 8, MITOCHONDRIAL"/>
    <property type="match status" value="1"/>
</dbReference>
<dbReference type="PANTHER" id="PTHR10849">
    <property type="entry name" value="NADH DEHYDROGENASE UBIQUINONE IRON-SULFUR PROTEIN 8, MITOCHONDRIAL"/>
    <property type="match status" value="1"/>
</dbReference>
<dbReference type="Pfam" id="PF12838">
    <property type="entry name" value="Fer4_7"/>
    <property type="match status" value="1"/>
</dbReference>
<dbReference type="SUPFAM" id="SSF54862">
    <property type="entry name" value="4Fe-4S ferredoxins"/>
    <property type="match status" value="1"/>
</dbReference>
<dbReference type="PROSITE" id="PS00198">
    <property type="entry name" value="4FE4S_FER_1"/>
    <property type="match status" value="2"/>
</dbReference>
<dbReference type="PROSITE" id="PS51379">
    <property type="entry name" value="4FE4S_FER_2"/>
    <property type="match status" value="2"/>
</dbReference>
<accession>Q2JFL2</accession>
<name>NUOI_FRACC</name>
<feature type="chain" id="PRO_0000245706" description="NADH-quinone oxidoreductase subunit I">
    <location>
        <begin position="1"/>
        <end position="217"/>
    </location>
</feature>
<feature type="domain" description="4Fe-4S ferredoxin-type 1" evidence="1">
    <location>
        <begin position="43"/>
        <end position="73"/>
    </location>
</feature>
<feature type="domain" description="4Fe-4S ferredoxin-type 2" evidence="1">
    <location>
        <begin position="89"/>
        <end position="118"/>
    </location>
</feature>
<feature type="region of interest" description="Disordered" evidence="2">
    <location>
        <begin position="22"/>
        <end position="41"/>
    </location>
</feature>
<feature type="region of interest" description="Disordered" evidence="2">
    <location>
        <begin position="193"/>
        <end position="217"/>
    </location>
</feature>
<feature type="binding site" evidence="1">
    <location>
        <position position="53"/>
    </location>
    <ligand>
        <name>[4Fe-4S] cluster</name>
        <dbReference type="ChEBI" id="CHEBI:49883"/>
        <label>1</label>
    </ligand>
</feature>
<feature type="binding site" evidence="1">
    <location>
        <position position="56"/>
    </location>
    <ligand>
        <name>[4Fe-4S] cluster</name>
        <dbReference type="ChEBI" id="CHEBI:49883"/>
        <label>1</label>
    </ligand>
</feature>
<feature type="binding site" evidence="1">
    <location>
        <position position="59"/>
    </location>
    <ligand>
        <name>[4Fe-4S] cluster</name>
        <dbReference type="ChEBI" id="CHEBI:49883"/>
        <label>1</label>
    </ligand>
</feature>
<feature type="binding site" evidence="1">
    <location>
        <position position="63"/>
    </location>
    <ligand>
        <name>[4Fe-4S] cluster</name>
        <dbReference type="ChEBI" id="CHEBI:49883"/>
        <label>2</label>
    </ligand>
</feature>
<feature type="binding site" evidence="1">
    <location>
        <position position="98"/>
    </location>
    <ligand>
        <name>[4Fe-4S] cluster</name>
        <dbReference type="ChEBI" id="CHEBI:49883"/>
        <label>2</label>
    </ligand>
</feature>
<feature type="binding site" evidence="1">
    <location>
        <position position="101"/>
    </location>
    <ligand>
        <name>[4Fe-4S] cluster</name>
        <dbReference type="ChEBI" id="CHEBI:49883"/>
        <label>2</label>
    </ligand>
</feature>
<feature type="binding site" evidence="1">
    <location>
        <position position="104"/>
    </location>
    <ligand>
        <name>[4Fe-4S] cluster</name>
        <dbReference type="ChEBI" id="CHEBI:49883"/>
        <label>2</label>
    </ligand>
</feature>
<feature type="binding site" evidence="1">
    <location>
        <position position="108"/>
    </location>
    <ligand>
        <name>[4Fe-4S] cluster</name>
        <dbReference type="ChEBI" id="CHEBI:49883"/>
        <label>1</label>
    </ligand>
</feature>
<keyword id="KW-0004">4Fe-4S</keyword>
<keyword id="KW-1003">Cell membrane</keyword>
<keyword id="KW-0408">Iron</keyword>
<keyword id="KW-0411">Iron-sulfur</keyword>
<keyword id="KW-0472">Membrane</keyword>
<keyword id="KW-0479">Metal-binding</keyword>
<keyword id="KW-0520">NAD</keyword>
<keyword id="KW-0874">Quinone</keyword>
<keyword id="KW-1185">Reference proteome</keyword>
<keyword id="KW-0677">Repeat</keyword>
<keyword id="KW-1278">Translocase</keyword>
<keyword id="KW-0830">Ubiquinone</keyword>
<proteinExistence type="inferred from homology"/>
<organism>
    <name type="scientific">Frankia casuarinae (strain DSM 45818 / CECT 9043 / HFP020203 / CcI3)</name>
    <dbReference type="NCBI Taxonomy" id="106370"/>
    <lineage>
        <taxon>Bacteria</taxon>
        <taxon>Bacillati</taxon>
        <taxon>Actinomycetota</taxon>
        <taxon>Actinomycetes</taxon>
        <taxon>Frankiales</taxon>
        <taxon>Frankiaceae</taxon>
        <taxon>Frankia</taxon>
    </lineage>
</organism>